<accession>P35449</accession>
<accession>Q95PV8</accession>
<accession>Q95PV9</accession>
<accession>Q95PW0</accession>
<protein>
    <recommendedName>
        <fullName>Probable Na(+)/H(+) antiporter nhx-9</fullName>
    </recommendedName>
    <alternativeName>
        <fullName>Na(+)-H(+) exchanger protein 9</fullName>
    </alternativeName>
</protein>
<comment type="function">
    <text>Serves some physiological function other than regulation of cellular pH.</text>
</comment>
<comment type="subcellular location">
    <subcellularLocation>
        <location>Cell membrane</location>
        <topology>Multi-pass membrane protein</topology>
    </subcellularLocation>
    <text>Excretory cell.</text>
</comment>
<comment type="alternative products">
    <event type="alternative splicing"/>
    <isoform>
        <id>P35449-1</id>
        <name>b</name>
        <sequence type="displayed"/>
    </isoform>
    <isoform>
        <id>P35449-2</id>
        <name>a</name>
        <sequence type="described" ref="VSP_003395"/>
    </isoform>
    <isoform>
        <id>P35449-3</id>
        <name>c</name>
        <sequence type="described" ref="VSP_003396"/>
    </isoform>
</comment>
<comment type="tissue specificity">
    <text>In early stage larva, expressed in the twin excretory cell processes. At later larval stages, expression is more restricted, resulting in a 'beads on a chain' appearance.</text>
</comment>
<comment type="PTM">
    <text evidence="5">Phosphorylated.</text>
</comment>
<comment type="similarity">
    <text evidence="5">Belongs to the monovalent cation:proton antiporter 1 (CPA1) transporter (TC 2.A.36) family.</text>
</comment>
<keyword id="KW-0025">Alternative splicing</keyword>
<keyword id="KW-0050">Antiport</keyword>
<keyword id="KW-1003">Cell membrane</keyword>
<keyword id="KW-0325">Glycoprotein</keyword>
<keyword id="KW-0406">Ion transport</keyword>
<keyword id="KW-0472">Membrane</keyword>
<keyword id="KW-0597">Phosphoprotein</keyword>
<keyword id="KW-1185">Reference proteome</keyword>
<keyword id="KW-0915">Sodium</keyword>
<keyword id="KW-0739">Sodium transport</keyword>
<keyword id="KW-0812">Transmembrane</keyword>
<keyword id="KW-1133">Transmembrane helix</keyword>
<keyword id="KW-0813">Transport</keyword>
<gene>
    <name type="primary">nhx-9</name>
    <name type="ORF">ZK822.3</name>
</gene>
<reference key="1">
    <citation type="journal article" date="2002" name="J. Biol. Chem.">
        <title>The NHX family of Na+-H+ exchangers in Caenorhabditis elegans.</title>
        <authorList>
            <person name="Nehrke K."/>
            <person name="Melvin J.E."/>
        </authorList>
    </citation>
    <scope>NUCLEOTIDE SEQUENCE [MRNA] (ISOFORMS A AND B)</scope>
</reference>
<reference key="2">
    <citation type="journal article" date="1998" name="Science">
        <title>Genome sequence of the nematode C. elegans: a platform for investigating biology.</title>
        <authorList>
            <consortium name="The C. elegans sequencing consortium"/>
        </authorList>
    </citation>
    <scope>NUCLEOTIDE SEQUENCE [LARGE SCALE GENOMIC DNA]</scope>
    <scope>ALTERNATIVE SPLICING</scope>
    <source>
        <strain>Bristol N2</strain>
    </source>
</reference>
<reference key="3">
    <citation type="journal article" date="1993" name="Mol. Gen. Genet.">
        <title>Molecular analysis of two genes between let-653 and let-56 in the unc-22(IV) region of Caenorhabditis elegans.</title>
        <authorList>
            <person name="Marra M.A."/>
            <person name="Prasad S.S."/>
            <person name="Baillie D.L."/>
        </authorList>
    </citation>
    <scope>NUCLEOTIDE SEQUENCE [MRNA] OF 58-667 (ISOFORMS A AND B)</scope>
    <source>
        <strain>Bristol N2</strain>
    </source>
</reference>
<name>NHX9_CAEEL</name>
<dbReference type="EMBL" id="AF497834">
    <property type="protein sequence ID" value="AAM18112.1"/>
    <property type="molecule type" value="mRNA"/>
</dbReference>
<dbReference type="EMBL" id="AF497835">
    <property type="protein sequence ID" value="AAM18113.1"/>
    <property type="molecule type" value="mRNA"/>
</dbReference>
<dbReference type="EMBL" id="Z73898">
    <property type="protein sequence ID" value="CAC42388.1"/>
    <property type="molecule type" value="Genomic_DNA"/>
</dbReference>
<dbReference type="EMBL" id="Z73898">
    <property type="protein sequence ID" value="CAC42389.1"/>
    <property type="molecule type" value="Genomic_DNA"/>
</dbReference>
<dbReference type="EMBL" id="Z73898">
    <property type="protein sequence ID" value="CAC42390.3"/>
    <property type="molecule type" value="Genomic_DNA"/>
</dbReference>
<dbReference type="EMBL" id="M23064">
    <property type="protein sequence ID" value="AAA27892.1"/>
    <property type="molecule type" value="mRNA"/>
</dbReference>
<dbReference type="RefSeq" id="NP_001023627.1">
    <molecule id="P35449-2"/>
    <property type="nucleotide sequence ID" value="NM_001028456.4"/>
</dbReference>
<dbReference type="RefSeq" id="NP_001023628.1">
    <molecule id="P35449-1"/>
    <property type="nucleotide sequence ID" value="NM_001028457.6"/>
</dbReference>
<dbReference type="RefSeq" id="NP_001023629.2">
    <property type="nucleotide sequence ID" value="NM_001028458.3"/>
</dbReference>
<dbReference type="RefSeq" id="NP_001379286.1">
    <molecule id="P35449-3"/>
    <property type="nucleotide sequence ID" value="NM_001392404.1"/>
</dbReference>
<dbReference type="SMR" id="P35449"/>
<dbReference type="FunCoup" id="P35449">
    <property type="interactions" value="239"/>
</dbReference>
<dbReference type="STRING" id="6239.ZK822.3b.1"/>
<dbReference type="GlyCosmos" id="P35449">
    <property type="glycosylation" value="1 site, No reported glycans"/>
</dbReference>
<dbReference type="iPTMnet" id="P35449"/>
<dbReference type="PaxDb" id="6239-ZK822.3b"/>
<dbReference type="PeptideAtlas" id="P35449"/>
<dbReference type="EnsemblMetazoa" id="ZK822.3a.1">
    <molecule id="P35449-2"/>
    <property type="protein sequence ID" value="ZK822.3a.1"/>
    <property type="gene ID" value="WBGene00003736"/>
</dbReference>
<dbReference type="EnsemblMetazoa" id="ZK822.3b.1">
    <molecule id="P35449-1"/>
    <property type="protein sequence ID" value="ZK822.3b.1"/>
    <property type="gene ID" value="WBGene00003736"/>
</dbReference>
<dbReference type="EnsemblMetazoa" id="ZK822.3c.1">
    <molecule id="P35449-3"/>
    <property type="protein sequence ID" value="ZK822.3c.1"/>
    <property type="gene ID" value="WBGene00003736"/>
</dbReference>
<dbReference type="GeneID" id="178126"/>
<dbReference type="KEGG" id="cel:CELE_ZK822.3"/>
<dbReference type="UCSC" id="ZK822.3b">
    <molecule id="P35449-1"/>
    <property type="organism name" value="c. elegans"/>
</dbReference>
<dbReference type="AGR" id="WB:WBGene00003736"/>
<dbReference type="CTD" id="178126"/>
<dbReference type="WormBase" id="ZK822.3a">
    <molecule id="P35449-2"/>
    <property type="protein sequence ID" value="CE27559"/>
    <property type="gene ID" value="WBGene00003736"/>
    <property type="gene designation" value="nhx-9"/>
</dbReference>
<dbReference type="WormBase" id="ZK822.3b">
    <molecule id="P35449-1"/>
    <property type="protein sequence ID" value="CE27560"/>
    <property type="gene ID" value="WBGene00003736"/>
    <property type="gene designation" value="nhx-9"/>
</dbReference>
<dbReference type="WormBase" id="ZK822.3c">
    <molecule id="P35449-3"/>
    <property type="protein sequence ID" value="CE28196"/>
    <property type="gene ID" value="WBGene00003736"/>
    <property type="gene designation" value="nhx-9"/>
</dbReference>
<dbReference type="eggNOG" id="KOG1966">
    <property type="taxonomic scope" value="Eukaryota"/>
</dbReference>
<dbReference type="InParanoid" id="P35449"/>
<dbReference type="OMA" id="ERYTYNT"/>
<dbReference type="OrthoDB" id="196264at2759"/>
<dbReference type="PhylomeDB" id="P35449"/>
<dbReference type="Reactome" id="R-CEL-425986">
    <property type="pathway name" value="Sodium/Proton exchangers"/>
</dbReference>
<dbReference type="PRO" id="PR:P35449"/>
<dbReference type="Proteomes" id="UP000001940">
    <property type="component" value="Chromosome IV"/>
</dbReference>
<dbReference type="Bgee" id="WBGene00003736">
    <property type="expression patterns" value="Expressed in larva and 4 other cell types or tissues"/>
</dbReference>
<dbReference type="GO" id="GO:0016020">
    <property type="term" value="C:membrane"/>
    <property type="evidence" value="ECO:0000303"/>
    <property type="project" value="UniProtKB"/>
</dbReference>
<dbReference type="GO" id="GO:0005886">
    <property type="term" value="C:plasma membrane"/>
    <property type="evidence" value="ECO:0000318"/>
    <property type="project" value="GO_Central"/>
</dbReference>
<dbReference type="GO" id="GO:0015386">
    <property type="term" value="F:potassium:proton antiporter activity"/>
    <property type="evidence" value="ECO:0000318"/>
    <property type="project" value="GO_Central"/>
</dbReference>
<dbReference type="GO" id="GO:0015385">
    <property type="term" value="F:sodium:proton antiporter activity"/>
    <property type="evidence" value="ECO:0000318"/>
    <property type="project" value="GO_Central"/>
</dbReference>
<dbReference type="GO" id="GO:0071805">
    <property type="term" value="P:potassium ion transmembrane transport"/>
    <property type="evidence" value="ECO:0000318"/>
    <property type="project" value="GO_Central"/>
</dbReference>
<dbReference type="GO" id="GO:0051453">
    <property type="term" value="P:regulation of intracellular pH"/>
    <property type="evidence" value="ECO:0000318"/>
    <property type="project" value="GO_Central"/>
</dbReference>
<dbReference type="GO" id="GO:0098719">
    <property type="term" value="P:sodium ion import across plasma membrane"/>
    <property type="evidence" value="ECO:0000318"/>
    <property type="project" value="GO_Central"/>
</dbReference>
<dbReference type="GO" id="GO:0006814">
    <property type="term" value="P:sodium ion transport"/>
    <property type="evidence" value="ECO:0000303"/>
    <property type="project" value="UniProtKB"/>
</dbReference>
<dbReference type="Gene3D" id="6.10.140.1330">
    <property type="match status" value="1"/>
</dbReference>
<dbReference type="InterPro" id="IPR018422">
    <property type="entry name" value="Cation/H_exchanger_CPA1"/>
</dbReference>
<dbReference type="InterPro" id="IPR006153">
    <property type="entry name" value="Cation/H_exchanger_TM"/>
</dbReference>
<dbReference type="InterPro" id="IPR004709">
    <property type="entry name" value="NaH_exchanger"/>
</dbReference>
<dbReference type="NCBIfam" id="TIGR00840">
    <property type="entry name" value="b_cpa1"/>
    <property type="match status" value="1"/>
</dbReference>
<dbReference type="PANTHER" id="PTHR10110">
    <property type="entry name" value="SODIUM/HYDROGEN EXCHANGER"/>
    <property type="match status" value="1"/>
</dbReference>
<dbReference type="PANTHER" id="PTHR10110:SF98">
    <property type="entry name" value="SODIUM_HYDROGEN EXCHANGER"/>
    <property type="match status" value="1"/>
</dbReference>
<dbReference type="Pfam" id="PF00999">
    <property type="entry name" value="Na_H_Exchanger"/>
    <property type="match status" value="1"/>
</dbReference>
<dbReference type="PRINTS" id="PR01084">
    <property type="entry name" value="NAHEXCHNGR"/>
</dbReference>
<proteinExistence type="evidence at transcript level"/>
<feature type="chain" id="PRO_0000052371" description="Probable Na(+)/H(+) antiporter nhx-9">
    <location>
        <begin position="1"/>
        <end position="667"/>
    </location>
</feature>
<feature type="transmembrane region" description="Helical" evidence="1">
    <location>
        <begin position="41"/>
        <end position="61"/>
    </location>
</feature>
<feature type="transmembrane region" description="Helical" evidence="1">
    <location>
        <begin position="73"/>
        <end position="93"/>
    </location>
</feature>
<feature type="transmembrane region" description="Helical" evidence="1">
    <location>
        <begin position="97"/>
        <end position="117"/>
    </location>
</feature>
<feature type="transmembrane region" description="Helical" evidence="1">
    <location>
        <begin position="128"/>
        <end position="148"/>
    </location>
</feature>
<feature type="transmembrane region" description="Helical" evidence="1">
    <location>
        <begin position="165"/>
        <end position="185"/>
    </location>
</feature>
<feature type="transmembrane region" description="Helical" evidence="1">
    <location>
        <begin position="192"/>
        <end position="212"/>
    </location>
</feature>
<feature type="transmembrane region" description="Helical" evidence="1">
    <location>
        <begin position="236"/>
        <end position="256"/>
    </location>
</feature>
<feature type="transmembrane region" description="Helical" evidence="1">
    <location>
        <begin position="268"/>
        <end position="288"/>
    </location>
</feature>
<feature type="transmembrane region" description="Helical" evidence="1">
    <location>
        <begin position="325"/>
        <end position="345"/>
    </location>
</feature>
<feature type="transmembrane region" description="Helical" evidence="1">
    <location>
        <begin position="351"/>
        <end position="371"/>
    </location>
</feature>
<feature type="transmembrane region" description="Helical" evidence="1">
    <location>
        <begin position="390"/>
        <end position="410"/>
    </location>
</feature>
<feature type="transmembrane region" description="Helical" evidence="1">
    <location>
        <begin position="418"/>
        <end position="438"/>
    </location>
</feature>
<feature type="region of interest" description="Disordered" evidence="2">
    <location>
        <begin position="637"/>
        <end position="667"/>
    </location>
</feature>
<feature type="modified residue" description="Phosphothreonine" evidence="1">
    <location>
        <position position="644"/>
    </location>
</feature>
<feature type="glycosylation site" description="N-linked (GlcNAc...) asparagine" evidence="1">
    <location>
        <position position="310"/>
    </location>
</feature>
<feature type="splice variant" id="VSP_003396" description="In isoform c." evidence="5">
    <location>
        <begin position="1"/>
        <end position="60"/>
    </location>
</feature>
<feature type="splice variant" id="VSP_003395" description="In isoform a." evidence="3 4">
    <original>MSSRLFVFFLICYATADKIEKELISDGFQ</original>
    <variation>MGHEYDIEE</variation>
    <location>
        <begin position="1"/>
        <end position="29"/>
    </location>
</feature>
<feature type="sequence conflict" description="In Ref. 3; AAA27892." evidence="5" ref="3">
    <original>DA</original>
    <variation>GSS</variation>
    <location>
        <begin position="111"/>
        <end position="112"/>
    </location>
</feature>
<feature type="sequence conflict" description="In Ref. 3; AAA27892." evidence="5" ref="3">
    <original>MFKS</original>
    <variation>CSK</variation>
    <location>
        <begin position="214"/>
        <end position="217"/>
    </location>
</feature>
<feature type="sequence conflict" description="In Ref. 3; AAA27892." evidence="5" ref="3">
    <original>A</original>
    <variation>R</variation>
    <location>
        <position position="415"/>
    </location>
</feature>
<feature type="sequence conflict" description="In Ref. 3; AAA27892." evidence="5" ref="3">
    <original>V</original>
    <variation>W</variation>
    <location>
        <position position="426"/>
    </location>
</feature>
<feature type="sequence conflict" description="In Ref. 3; AAA27892." evidence="5" ref="3">
    <location>
        <position position="625"/>
    </location>
</feature>
<sequence>MSSRLFVFFLICYATADKIEKELISDGFQLFTWKWDDVHHVYVITVWLLIASLAKILFNLMKPISKWCPDSSLLIIVGLALGWILHQTSLSGATLDSHTFFLYLLPPIIFDAGYFMPNRALFENFDSVLVFSVFGTIWNTFAIGGSLLLMAQYDLFTMSFTTFEILVFSALISAVDPVAVIAVFEEIHVNEFLFINVFGEALFNDGVTVVLYQMFKSFALIGSENLSVLDYATGGLSFFVVALGGAAVGIIFAIAASLTTKYTYDVRILAPVFIFVLPYMAYLTAEMVSLSSIIAIAICGMLMKQYIKGNVTQAAANSVKYFTKMLAQSSETVIFMFLGLSTISSQHHFDLYFICATLFFCLIYRAIGIVVQCYILNRFRAKKFEMVDQFIMSYGGLRGAIAYGLVVSIPASITAKPMFITATIAVIYFTVFLQGITIRPLVNFLKIKKKEERDPTMVESVYNKYLDYMMSGVEDIAGQKGHYTFIENFERFNAKVIKPVLMRHQKRESFDASSIVRAYEKITLEDAIKLAKVKNNIQNKRLERIKSKGRVAPILPDKISNQKTMTPKDLQLKRFMESGENIDSLYTLFSDLLDRKLHEMNRPSVQITDVDGQDDIQDDYMAEVGSRSNLSAMFRSTEQLPSETPFHSGRRQSTGDLNATRRADFNV</sequence>
<organism>
    <name type="scientific">Caenorhabditis elegans</name>
    <dbReference type="NCBI Taxonomy" id="6239"/>
    <lineage>
        <taxon>Eukaryota</taxon>
        <taxon>Metazoa</taxon>
        <taxon>Ecdysozoa</taxon>
        <taxon>Nematoda</taxon>
        <taxon>Chromadorea</taxon>
        <taxon>Rhabditida</taxon>
        <taxon>Rhabditina</taxon>
        <taxon>Rhabditomorpha</taxon>
        <taxon>Rhabditoidea</taxon>
        <taxon>Rhabditidae</taxon>
        <taxon>Peloderinae</taxon>
        <taxon>Caenorhabditis</taxon>
    </lineage>
</organism>
<evidence type="ECO:0000255" key="1"/>
<evidence type="ECO:0000256" key="2">
    <source>
        <dbReference type="SAM" id="MobiDB-lite"/>
    </source>
</evidence>
<evidence type="ECO:0000303" key="3">
    <source>
    </source>
</evidence>
<evidence type="ECO:0000303" key="4">
    <source>
    </source>
</evidence>
<evidence type="ECO:0000305" key="5"/>